<proteinExistence type="uncertain"/>
<organism>
    <name type="scientific">Saccharomyces cerevisiae (strain ATCC 204508 / S288c)</name>
    <name type="common">Baker's yeast</name>
    <dbReference type="NCBI Taxonomy" id="559292"/>
    <lineage>
        <taxon>Eukaryota</taxon>
        <taxon>Fungi</taxon>
        <taxon>Dikarya</taxon>
        <taxon>Ascomycota</taxon>
        <taxon>Saccharomycotina</taxon>
        <taxon>Saccharomycetes</taxon>
        <taxon>Saccharomycetales</taxon>
        <taxon>Saccharomycetaceae</taxon>
        <taxon>Saccharomyces</taxon>
    </lineage>
</organism>
<name>YG3G_YEAST</name>
<gene>
    <name type="ordered locus">YGR139W</name>
</gene>
<dbReference type="EMBL" id="Z72924">
    <property type="protein sequence ID" value="CAA97152.1"/>
    <property type="molecule type" value="Genomic_DNA"/>
</dbReference>
<dbReference type="PIR" id="S64448">
    <property type="entry name" value="S64448"/>
</dbReference>
<dbReference type="DIP" id="DIP-4487N"/>
<dbReference type="IntAct" id="P53284">
    <property type="interactions" value="1"/>
</dbReference>
<dbReference type="PaxDb" id="4932-YGR139W"/>
<dbReference type="EnsemblFungi" id="YGR139W_mRNA">
    <property type="protein sequence ID" value="YGR139W"/>
    <property type="gene ID" value="YGR139W"/>
</dbReference>
<dbReference type="AGR" id="SGD:S000003371"/>
<dbReference type="SGD" id="S000003371">
    <property type="gene designation" value="YGR139W"/>
</dbReference>
<dbReference type="HOGENOM" id="CLU_2147816_0_0_1"/>
<feature type="chain" id="PRO_0000202827" description="Putative uncharacterized protein YGR139W">
    <location>
        <begin position="1"/>
        <end position="112"/>
    </location>
</feature>
<evidence type="ECO:0000305" key="1">
    <source>
    </source>
</evidence>
<comment type="caution">
    <text evidence="1">Product of a dubious gene prediction unlikely to encode a functional protein. Because of that it is not part of the S.cerevisiae S288c complete/reference proteome set.</text>
</comment>
<accession>P53284</accession>
<reference key="1">
    <citation type="journal article" date="1997" name="Nature">
        <title>The nucleotide sequence of Saccharomyces cerevisiae chromosome VII.</title>
        <authorList>
            <person name="Tettelin H."/>
            <person name="Agostoni-Carbone M.L."/>
            <person name="Albermann K."/>
            <person name="Albers M."/>
            <person name="Arroyo J."/>
            <person name="Backes U."/>
            <person name="Barreiros T."/>
            <person name="Bertani I."/>
            <person name="Bjourson A.J."/>
            <person name="Brueckner M."/>
            <person name="Bruschi C.V."/>
            <person name="Carignani G."/>
            <person name="Castagnoli L."/>
            <person name="Cerdan E."/>
            <person name="Clemente M.L."/>
            <person name="Coblenz A."/>
            <person name="Coglievina M."/>
            <person name="Coissac E."/>
            <person name="Defoor E."/>
            <person name="Del Bino S."/>
            <person name="Delius H."/>
            <person name="Delneri D."/>
            <person name="de Wergifosse P."/>
            <person name="Dujon B."/>
            <person name="Durand P."/>
            <person name="Entian K.-D."/>
            <person name="Eraso P."/>
            <person name="Escribano V."/>
            <person name="Fabiani L."/>
            <person name="Fartmann B."/>
            <person name="Feroli F."/>
            <person name="Feuermann M."/>
            <person name="Frontali L."/>
            <person name="Garcia-Gonzalez M."/>
            <person name="Garcia-Saez M.I."/>
            <person name="Goffeau A."/>
            <person name="Guerreiro P."/>
            <person name="Hani J."/>
            <person name="Hansen M."/>
            <person name="Hebling U."/>
            <person name="Hernandez K."/>
            <person name="Heumann K."/>
            <person name="Hilger F."/>
            <person name="Hofmann B."/>
            <person name="Indge K.J."/>
            <person name="James C.M."/>
            <person name="Klima R."/>
            <person name="Koetter P."/>
            <person name="Kramer B."/>
            <person name="Kramer W."/>
            <person name="Lauquin G."/>
            <person name="Leuther H."/>
            <person name="Louis E.J."/>
            <person name="Maillier E."/>
            <person name="Marconi A."/>
            <person name="Martegani E."/>
            <person name="Mazon M.J."/>
            <person name="Mazzoni C."/>
            <person name="McReynolds A.D.K."/>
            <person name="Melchioretto P."/>
            <person name="Mewes H.-W."/>
            <person name="Minenkova O."/>
            <person name="Mueller-Auer S."/>
            <person name="Nawrocki A."/>
            <person name="Netter P."/>
            <person name="Neu R."/>
            <person name="Nombela C."/>
            <person name="Oliver S.G."/>
            <person name="Panzeri L."/>
            <person name="Paoluzi S."/>
            <person name="Plevani P."/>
            <person name="Portetelle D."/>
            <person name="Portillo F."/>
            <person name="Potier S."/>
            <person name="Purnelle B."/>
            <person name="Rieger M."/>
            <person name="Riles L."/>
            <person name="Rinaldi T."/>
            <person name="Robben J."/>
            <person name="Rodrigues-Pousada C."/>
            <person name="Rodriguez-Belmonte E."/>
            <person name="Rodriguez-Torres A.M."/>
            <person name="Rose M."/>
            <person name="Ruzzi M."/>
            <person name="Saliola M."/>
            <person name="Sanchez-Perez M."/>
            <person name="Schaefer B."/>
            <person name="Schaefer M."/>
            <person name="Scharfe M."/>
            <person name="Schmidheini T."/>
            <person name="Schreer A."/>
            <person name="Skala J."/>
            <person name="Souciet J.-L."/>
            <person name="Steensma H.Y."/>
            <person name="Talla E."/>
            <person name="Thierry A."/>
            <person name="Vandenbol M."/>
            <person name="van der Aart Q.J.M."/>
            <person name="Van Dyck L."/>
            <person name="Vanoni M."/>
            <person name="Verhasselt P."/>
            <person name="Voet M."/>
            <person name="Volckaert G."/>
            <person name="Wambutt R."/>
            <person name="Watson M.D."/>
            <person name="Weber N."/>
            <person name="Wedler E."/>
            <person name="Wedler H."/>
            <person name="Wipfli P."/>
            <person name="Wolf K."/>
            <person name="Wright L.F."/>
            <person name="Zaccaria P."/>
            <person name="Zimmermann M."/>
            <person name="Zollner A."/>
            <person name="Kleine K."/>
        </authorList>
    </citation>
    <scope>NUCLEOTIDE SEQUENCE [LARGE SCALE GENOMIC DNA]</scope>
    <source>
        <strain>ATCC 204508 / S288c</strain>
    </source>
</reference>
<reference key="2">
    <citation type="journal article" date="2014" name="G3 (Bethesda)">
        <title>The reference genome sequence of Saccharomyces cerevisiae: Then and now.</title>
        <authorList>
            <person name="Engel S.R."/>
            <person name="Dietrich F.S."/>
            <person name="Fisk D.G."/>
            <person name="Binkley G."/>
            <person name="Balakrishnan R."/>
            <person name="Costanzo M.C."/>
            <person name="Dwight S.S."/>
            <person name="Hitz B.C."/>
            <person name="Karra K."/>
            <person name="Nash R.S."/>
            <person name="Weng S."/>
            <person name="Wong E.D."/>
            <person name="Lloyd P."/>
            <person name="Skrzypek M.S."/>
            <person name="Miyasato S.R."/>
            <person name="Simison M."/>
            <person name="Cherry J.M."/>
        </authorList>
    </citation>
    <scope>GENOME REANNOTATION</scope>
    <source>
        <strain>ATCC 204508 / S288c</strain>
    </source>
</reference>
<protein>
    <recommendedName>
        <fullName>Putative uncharacterized protein YGR139W</fullName>
    </recommendedName>
</protein>
<sequence>MYQLLFEIKVKIKIQTEKKKKLNIKLDIVGEGSCILFSINTNNKMIYLFSYFFLMSSGKKNINKYKKILVRNLKRVYAQCIYIARKKNKQWHYSACGWQCSSVAFSKNLECV</sequence>